<dbReference type="EC" id="6.1.1.16" evidence="1"/>
<dbReference type="EMBL" id="CP000721">
    <property type="protein sequence ID" value="ABR32321.1"/>
    <property type="molecule type" value="Genomic_DNA"/>
</dbReference>
<dbReference type="RefSeq" id="WP_011967494.1">
    <property type="nucleotide sequence ID" value="NC_009617.1"/>
</dbReference>
<dbReference type="SMR" id="A6LPP1"/>
<dbReference type="KEGG" id="cbe:Cbei_0131"/>
<dbReference type="eggNOG" id="COG0215">
    <property type="taxonomic scope" value="Bacteria"/>
</dbReference>
<dbReference type="HOGENOM" id="CLU_013528_0_1_9"/>
<dbReference type="Proteomes" id="UP000000565">
    <property type="component" value="Chromosome"/>
</dbReference>
<dbReference type="GO" id="GO:0005829">
    <property type="term" value="C:cytosol"/>
    <property type="evidence" value="ECO:0007669"/>
    <property type="project" value="TreeGrafter"/>
</dbReference>
<dbReference type="GO" id="GO:0005524">
    <property type="term" value="F:ATP binding"/>
    <property type="evidence" value="ECO:0007669"/>
    <property type="project" value="UniProtKB-UniRule"/>
</dbReference>
<dbReference type="GO" id="GO:0004817">
    <property type="term" value="F:cysteine-tRNA ligase activity"/>
    <property type="evidence" value="ECO:0007669"/>
    <property type="project" value="UniProtKB-UniRule"/>
</dbReference>
<dbReference type="GO" id="GO:0008270">
    <property type="term" value="F:zinc ion binding"/>
    <property type="evidence" value="ECO:0007669"/>
    <property type="project" value="UniProtKB-UniRule"/>
</dbReference>
<dbReference type="GO" id="GO:0006423">
    <property type="term" value="P:cysteinyl-tRNA aminoacylation"/>
    <property type="evidence" value="ECO:0007669"/>
    <property type="project" value="UniProtKB-UniRule"/>
</dbReference>
<dbReference type="CDD" id="cd00672">
    <property type="entry name" value="CysRS_core"/>
    <property type="match status" value="1"/>
</dbReference>
<dbReference type="FunFam" id="3.40.50.620:FF:000009">
    <property type="entry name" value="Cysteine--tRNA ligase"/>
    <property type="match status" value="1"/>
</dbReference>
<dbReference type="Gene3D" id="1.20.120.1910">
    <property type="entry name" value="Cysteine-tRNA ligase, C-terminal anti-codon recognition domain"/>
    <property type="match status" value="1"/>
</dbReference>
<dbReference type="Gene3D" id="3.40.50.620">
    <property type="entry name" value="HUPs"/>
    <property type="match status" value="1"/>
</dbReference>
<dbReference type="HAMAP" id="MF_00041">
    <property type="entry name" value="Cys_tRNA_synth"/>
    <property type="match status" value="1"/>
</dbReference>
<dbReference type="InterPro" id="IPR015803">
    <property type="entry name" value="Cys-tRNA-ligase"/>
</dbReference>
<dbReference type="InterPro" id="IPR015273">
    <property type="entry name" value="Cys-tRNA-synt_Ia_DALR"/>
</dbReference>
<dbReference type="InterPro" id="IPR024909">
    <property type="entry name" value="Cys-tRNA/MSH_ligase"/>
</dbReference>
<dbReference type="InterPro" id="IPR056411">
    <property type="entry name" value="CysS_C"/>
</dbReference>
<dbReference type="InterPro" id="IPR014729">
    <property type="entry name" value="Rossmann-like_a/b/a_fold"/>
</dbReference>
<dbReference type="InterPro" id="IPR032678">
    <property type="entry name" value="tRNA-synt_1_cat_dom"/>
</dbReference>
<dbReference type="InterPro" id="IPR009080">
    <property type="entry name" value="tRNAsynth_Ia_anticodon-bd"/>
</dbReference>
<dbReference type="NCBIfam" id="TIGR00435">
    <property type="entry name" value="cysS"/>
    <property type="match status" value="1"/>
</dbReference>
<dbReference type="PANTHER" id="PTHR10890:SF3">
    <property type="entry name" value="CYSTEINE--TRNA LIGASE, CYTOPLASMIC"/>
    <property type="match status" value="1"/>
</dbReference>
<dbReference type="PANTHER" id="PTHR10890">
    <property type="entry name" value="CYSTEINYL-TRNA SYNTHETASE"/>
    <property type="match status" value="1"/>
</dbReference>
<dbReference type="Pfam" id="PF23493">
    <property type="entry name" value="CysS_C"/>
    <property type="match status" value="1"/>
</dbReference>
<dbReference type="Pfam" id="PF09190">
    <property type="entry name" value="DALR_2"/>
    <property type="match status" value="1"/>
</dbReference>
<dbReference type="Pfam" id="PF01406">
    <property type="entry name" value="tRNA-synt_1e"/>
    <property type="match status" value="1"/>
</dbReference>
<dbReference type="PRINTS" id="PR00983">
    <property type="entry name" value="TRNASYNTHCYS"/>
</dbReference>
<dbReference type="SMART" id="SM00840">
    <property type="entry name" value="DALR_2"/>
    <property type="match status" value="1"/>
</dbReference>
<dbReference type="SUPFAM" id="SSF47323">
    <property type="entry name" value="Anticodon-binding domain of a subclass of class I aminoacyl-tRNA synthetases"/>
    <property type="match status" value="1"/>
</dbReference>
<dbReference type="SUPFAM" id="SSF52374">
    <property type="entry name" value="Nucleotidylyl transferase"/>
    <property type="match status" value="1"/>
</dbReference>
<feature type="chain" id="PRO_0000332800" description="Cysteine--tRNA ligase">
    <location>
        <begin position="1"/>
        <end position="466"/>
    </location>
</feature>
<feature type="short sequence motif" description="'HIGH' region">
    <location>
        <begin position="29"/>
        <end position="39"/>
    </location>
</feature>
<feature type="short sequence motif" description="'KMSKS' region">
    <location>
        <begin position="264"/>
        <end position="268"/>
    </location>
</feature>
<feature type="binding site" evidence="1">
    <location>
        <position position="27"/>
    </location>
    <ligand>
        <name>Zn(2+)</name>
        <dbReference type="ChEBI" id="CHEBI:29105"/>
    </ligand>
</feature>
<feature type="binding site" evidence="1">
    <location>
        <position position="207"/>
    </location>
    <ligand>
        <name>Zn(2+)</name>
        <dbReference type="ChEBI" id="CHEBI:29105"/>
    </ligand>
</feature>
<feature type="binding site" evidence="1">
    <location>
        <position position="232"/>
    </location>
    <ligand>
        <name>Zn(2+)</name>
        <dbReference type="ChEBI" id="CHEBI:29105"/>
    </ligand>
</feature>
<feature type="binding site" evidence="1">
    <location>
        <position position="236"/>
    </location>
    <ligand>
        <name>Zn(2+)</name>
        <dbReference type="ChEBI" id="CHEBI:29105"/>
    </ligand>
</feature>
<feature type="binding site" evidence="1">
    <location>
        <position position="267"/>
    </location>
    <ligand>
        <name>ATP</name>
        <dbReference type="ChEBI" id="CHEBI:30616"/>
    </ligand>
</feature>
<name>SYC_CLOB8</name>
<keyword id="KW-0030">Aminoacyl-tRNA synthetase</keyword>
<keyword id="KW-0067">ATP-binding</keyword>
<keyword id="KW-0963">Cytoplasm</keyword>
<keyword id="KW-0436">Ligase</keyword>
<keyword id="KW-0479">Metal-binding</keyword>
<keyword id="KW-0547">Nucleotide-binding</keyword>
<keyword id="KW-0648">Protein biosynthesis</keyword>
<keyword id="KW-0862">Zinc</keyword>
<gene>
    <name evidence="1" type="primary">cysS</name>
    <name type="ordered locus">Cbei_0131</name>
</gene>
<reference key="1">
    <citation type="submission" date="2007-06" db="EMBL/GenBank/DDBJ databases">
        <title>Complete sequence of Clostridium beijerinckii NCIMB 8052.</title>
        <authorList>
            <consortium name="US DOE Joint Genome Institute"/>
            <person name="Copeland A."/>
            <person name="Lucas S."/>
            <person name="Lapidus A."/>
            <person name="Barry K."/>
            <person name="Detter J.C."/>
            <person name="Glavina del Rio T."/>
            <person name="Hammon N."/>
            <person name="Israni S."/>
            <person name="Dalin E."/>
            <person name="Tice H."/>
            <person name="Pitluck S."/>
            <person name="Sims D."/>
            <person name="Brettin T."/>
            <person name="Bruce D."/>
            <person name="Tapia R."/>
            <person name="Brainard J."/>
            <person name="Schmutz J."/>
            <person name="Larimer F."/>
            <person name="Land M."/>
            <person name="Hauser L."/>
            <person name="Kyrpides N."/>
            <person name="Mikhailova N."/>
            <person name="Bennet G."/>
            <person name="Cann I."/>
            <person name="Chen J.-S."/>
            <person name="Contreras A.L."/>
            <person name="Jones D."/>
            <person name="Kashket E."/>
            <person name="Mitchell W."/>
            <person name="Stoddard S."/>
            <person name="Schwarz W."/>
            <person name="Qureshi N."/>
            <person name="Young M."/>
            <person name="Shi Z."/>
            <person name="Ezeji T."/>
            <person name="White B."/>
            <person name="Blaschek H."/>
            <person name="Richardson P."/>
        </authorList>
    </citation>
    <scope>NUCLEOTIDE SEQUENCE [LARGE SCALE GENOMIC DNA]</scope>
    <source>
        <strain>ATCC 51743 / NCIMB 8052</strain>
    </source>
</reference>
<sequence>MRVFNTLTRQKEEFIPIITGEVKMYVCGPTVYNFFHIGNGRTFIVFDTIRRYLEYRGYKVRFVQNFTDIDDKMINKANDEGITVKELGDKYIKEYYQDADSLKIERATVNPRATEYIHDIIKFVEELIEAGFAYEVDGDVYYSTKKFDNYGRLVGQNLDDLQVGARISVDERKKDPMDFAVWKAQKPGEPAWESPWGPGRPGWHIECSCMAKKLLGDTIDIHAGGMDLRFPHHENEIAQSEALTGKTFANYWLHAAFVNVDNKKMSKSLNNFFTAREVLEEYSSDAIRFLMLSGHYRIQINFTKELLDSAKSSIERLYNCINNLENLKDEVTKKLMDEAEEKYLKSLDKYREKFIEKMDDDFNTADAISVLFDLTKDINNNVNINSSSELCEKAESMVRELGNPLGILQDRIEKDLETEIQELIEKRQQARKNKDFALADKIRDDLKSRNIILEDTPQGVRWKKID</sequence>
<proteinExistence type="inferred from homology"/>
<accession>A6LPP1</accession>
<evidence type="ECO:0000255" key="1">
    <source>
        <dbReference type="HAMAP-Rule" id="MF_00041"/>
    </source>
</evidence>
<comment type="catalytic activity">
    <reaction evidence="1">
        <text>tRNA(Cys) + L-cysteine + ATP = L-cysteinyl-tRNA(Cys) + AMP + diphosphate</text>
        <dbReference type="Rhea" id="RHEA:17773"/>
        <dbReference type="Rhea" id="RHEA-COMP:9661"/>
        <dbReference type="Rhea" id="RHEA-COMP:9679"/>
        <dbReference type="ChEBI" id="CHEBI:30616"/>
        <dbReference type="ChEBI" id="CHEBI:33019"/>
        <dbReference type="ChEBI" id="CHEBI:35235"/>
        <dbReference type="ChEBI" id="CHEBI:78442"/>
        <dbReference type="ChEBI" id="CHEBI:78517"/>
        <dbReference type="ChEBI" id="CHEBI:456215"/>
        <dbReference type="EC" id="6.1.1.16"/>
    </reaction>
</comment>
<comment type="cofactor">
    <cofactor evidence="1">
        <name>Zn(2+)</name>
        <dbReference type="ChEBI" id="CHEBI:29105"/>
    </cofactor>
    <text evidence="1">Binds 1 zinc ion per subunit.</text>
</comment>
<comment type="subunit">
    <text evidence="1">Monomer.</text>
</comment>
<comment type="subcellular location">
    <subcellularLocation>
        <location evidence="1">Cytoplasm</location>
    </subcellularLocation>
</comment>
<comment type="similarity">
    <text evidence="1">Belongs to the class-I aminoacyl-tRNA synthetase family.</text>
</comment>
<protein>
    <recommendedName>
        <fullName evidence="1">Cysteine--tRNA ligase</fullName>
        <ecNumber evidence="1">6.1.1.16</ecNumber>
    </recommendedName>
    <alternativeName>
        <fullName evidence="1">Cysteinyl-tRNA synthetase</fullName>
        <shortName evidence="1">CysRS</shortName>
    </alternativeName>
</protein>
<organism>
    <name type="scientific">Clostridium beijerinckii (strain ATCC 51743 / NCIMB 8052)</name>
    <name type="common">Clostridium acetobutylicum</name>
    <dbReference type="NCBI Taxonomy" id="290402"/>
    <lineage>
        <taxon>Bacteria</taxon>
        <taxon>Bacillati</taxon>
        <taxon>Bacillota</taxon>
        <taxon>Clostridia</taxon>
        <taxon>Eubacteriales</taxon>
        <taxon>Clostridiaceae</taxon>
        <taxon>Clostridium</taxon>
    </lineage>
</organism>